<comment type="function">
    <text evidence="1">One of the components of the core complex of photosystem II (PSII). PSII is a light-driven water:plastoquinone oxidoreductase that uses light energy to abstract electrons from H(2)O, generating O(2) and a proton gradient subsequently used for ATP formation. It consists of a core antenna complex that captures photons, and an electron transfer chain that converts photonic excitation into a charge separation.</text>
</comment>
<comment type="subunit">
    <text evidence="1">PSII is composed of 1 copy each of membrane proteins PsbA, PsbB, PsbC, PsbD, PsbE, PsbF, PsbH, PsbI, PsbJ, PsbK, PsbL, PsbM, PsbT, PsbX, PsbY, PsbZ, Psb30/Ycf12, peripheral proteins PsbO, CyanoQ (PsbQ), PsbU, PsbV and a large number of cofactors. It forms dimeric complexes.</text>
</comment>
<comment type="subcellular location">
    <subcellularLocation>
        <location evidence="1">Cellular thylakoid membrane</location>
        <topology evidence="1">Single-pass membrane protein</topology>
    </subcellularLocation>
</comment>
<comment type="similarity">
    <text evidence="1">Belongs to the PsbK family.</text>
</comment>
<keyword id="KW-0472">Membrane</keyword>
<keyword id="KW-0602">Photosynthesis</keyword>
<keyword id="KW-0604">Photosystem II</keyword>
<keyword id="KW-0674">Reaction center</keyword>
<keyword id="KW-1185">Reference proteome</keyword>
<keyword id="KW-0793">Thylakoid</keyword>
<keyword id="KW-0812">Transmembrane</keyword>
<keyword id="KW-1133">Transmembrane helix</keyword>
<gene>
    <name evidence="1" type="primary">psbK</name>
    <name type="ordered locus">sync_0283</name>
</gene>
<proteinExistence type="inferred from homology"/>
<protein>
    <recommendedName>
        <fullName evidence="1">Photosystem II reaction center protein K</fullName>
        <shortName evidence="1">PSII-K</shortName>
    </recommendedName>
</protein>
<name>PSBK_SYNS3</name>
<accession>Q0IDF4</accession>
<sequence>MAVYTLDLLAQLPEAYQAFGPLIDILPIIPLFFLLLAFVWQASVGFR</sequence>
<reference key="1">
    <citation type="journal article" date="2006" name="Proc. Natl. Acad. Sci. U.S.A.">
        <title>Genome sequence of Synechococcus CC9311: insights into adaptation to a coastal environment.</title>
        <authorList>
            <person name="Palenik B."/>
            <person name="Ren Q."/>
            <person name="Dupont C.L."/>
            <person name="Myers G.S."/>
            <person name="Heidelberg J.F."/>
            <person name="Badger J.H."/>
            <person name="Madupu R."/>
            <person name="Nelson W.C."/>
            <person name="Brinkac L.M."/>
            <person name="Dodson R.J."/>
            <person name="Durkin A.S."/>
            <person name="Daugherty S.C."/>
            <person name="Sullivan S.A."/>
            <person name="Khouri H."/>
            <person name="Mohamoud Y."/>
            <person name="Halpin R."/>
            <person name="Paulsen I.T."/>
        </authorList>
    </citation>
    <scope>NUCLEOTIDE SEQUENCE [LARGE SCALE GENOMIC DNA]</scope>
    <source>
        <strain>CC9311</strain>
    </source>
</reference>
<feature type="propeptide" id="PRO_0000316081" evidence="1">
    <location>
        <begin position="1"/>
        <end position="10"/>
    </location>
</feature>
<feature type="chain" id="PRO_1000025986" description="Photosystem II reaction center protein K" evidence="1">
    <location>
        <begin position="11"/>
        <end position="47"/>
    </location>
</feature>
<feature type="transmembrane region" description="Helical" evidence="1">
    <location>
        <begin position="19"/>
        <end position="39"/>
    </location>
</feature>
<dbReference type="EMBL" id="CP000435">
    <property type="protein sequence ID" value="ABI46663.1"/>
    <property type="molecule type" value="Genomic_DNA"/>
</dbReference>
<dbReference type="RefSeq" id="WP_011618263.1">
    <property type="nucleotide sequence ID" value="NC_008319.1"/>
</dbReference>
<dbReference type="SMR" id="Q0IDF4"/>
<dbReference type="STRING" id="64471.sync_0283"/>
<dbReference type="KEGG" id="syg:sync_0283"/>
<dbReference type="eggNOG" id="ENOG5032YQR">
    <property type="taxonomic scope" value="Bacteria"/>
</dbReference>
<dbReference type="HOGENOM" id="CLU_174355_0_0_3"/>
<dbReference type="Proteomes" id="UP000001961">
    <property type="component" value="Chromosome"/>
</dbReference>
<dbReference type="GO" id="GO:0009539">
    <property type="term" value="C:photosystem II reaction center"/>
    <property type="evidence" value="ECO:0007669"/>
    <property type="project" value="InterPro"/>
</dbReference>
<dbReference type="GO" id="GO:0031676">
    <property type="term" value="C:plasma membrane-derived thylakoid membrane"/>
    <property type="evidence" value="ECO:0007669"/>
    <property type="project" value="UniProtKB-SubCell"/>
</dbReference>
<dbReference type="GO" id="GO:0015979">
    <property type="term" value="P:photosynthesis"/>
    <property type="evidence" value="ECO:0007669"/>
    <property type="project" value="UniProtKB-UniRule"/>
</dbReference>
<dbReference type="HAMAP" id="MF_00441">
    <property type="entry name" value="PSII_PsbK"/>
    <property type="match status" value="1"/>
</dbReference>
<dbReference type="InterPro" id="IPR003687">
    <property type="entry name" value="PSII_PsbK"/>
</dbReference>
<dbReference type="InterPro" id="IPR037270">
    <property type="entry name" value="PSII_PsbK_sf"/>
</dbReference>
<dbReference type="NCBIfam" id="NF002715">
    <property type="entry name" value="PRK02553.1"/>
    <property type="match status" value="1"/>
</dbReference>
<dbReference type="PANTHER" id="PTHR35325">
    <property type="match status" value="1"/>
</dbReference>
<dbReference type="PANTHER" id="PTHR35325:SF1">
    <property type="entry name" value="PHOTOSYSTEM II REACTION CENTER PROTEIN K"/>
    <property type="match status" value="1"/>
</dbReference>
<dbReference type="Pfam" id="PF02533">
    <property type="entry name" value="PsbK"/>
    <property type="match status" value="1"/>
</dbReference>
<dbReference type="SUPFAM" id="SSF161037">
    <property type="entry name" value="Photosystem II reaction center protein K, PsbK"/>
    <property type="match status" value="1"/>
</dbReference>
<organism>
    <name type="scientific">Synechococcus sp. (strain CC9311)</name>
    <dbReference type="NCBI Taxonomy" id="64471"/>
    <lineage>
        <taxon>Bacteria</taxon>
        <taxon>Bacillati</taxon>
        <taxon>Cyanobacteriota</taxon>
        <taxon>Cyanophyceae</taxon>
        <taxon>Synechococcales</taxon>
        <taxon>Synechococcaceae</taxon>
        <taxon>Synechococcus</taxon>
    </lineage>
</organism>
<evidence type="ECO:0000255" key="1">
    <source>
        <dbReference type="HAMAP-Rule" id="MF_00441"/>
    </source>
</evidence>